<comment type="function">
    <text evidence="2">Component of the cytochrome c oxidase, the last enzyme in the mitochondrial electron transport chain which drives oxidative phosphorylation. The respiratory chain contains 3 multisubunit complexes succinate dehydrogenase (complex II, CII), ubiquinol-cytochrome c oxidoreductase (cytochrome b-c1 complex, complex III, CIII) and cytochrome c oxidase (complex IV, CIV), that cooperate to transfer electrons derived from NADH and succinate to molecular oxygen, creating an electrochemical gradient over the inner membrane that drives transmembrane transport and the ATP synthase. Cytochrome c oxidase is the component of the respiratory chain that catalyzes the reduction of oxygen to water. Electrons originating from reduced cytochrome c in the intermembrane space (IMS) are transferred via the dinuclear copper A center (CU(A)) of Cox2 and heme A of Cox1 to the active site in Cox1, a binuclear center (BNC) formed by heme A3 and copper B (CU(B)). The BNC reduces molecular oxygen to 2 water molecules using 4 electrons from cytochrome c in the IMS and 4 protons from the mitochondrial matrix.</text>
</comment>
<comment type="catalytic activity">
    <reaction evidence="2">
        <text>4 Fe(II)-[cytochrome c] + O2 + 8 H(+)(in) = 4 Fe(III)-[cytochrome c] + 2 H2O + 4 H(+)(out)</text>
        <dbReference type="Rhea" id="RHEA:11436"/>
        <dbReference type="Rhea" id="RHEA-COMP:10350"/>
        <dbReference type="Rhea" id="RHEA-COMP:14399"/>
        <dbReference type="ChEBI" id="CHEBI:15377"/>
        <dbReference type="ChEBI" id="CHEBI:15378"/>
        <dbReference type="ChEBI" id="CHEBI:15379"/>
        <dbReference type="ChEBI" id="CHEBI:29033"/>
        <dbReference type="ChEBI" id="CHEBI:29034"/>
        <dbReference type="EC" id="7.1.1.9"/>
    </reaction>
    <physiologicalReaction direction="left-to-right" evidence="2">
        <dbReference type="Rhea" id="RHEA:11437"/>
    </physiologicalReaction>
</comment>
<comment type="cofactor">
    <cofactor evidence="2">
        <name>heme</name>
        <dbReference type="ChEBI" id="CHEBI:30413"/>
    </cofactor>
    <text evidence="2">Binds 2 heme A groups non-covalently per subunit.</text>
</comment>
<comment type="cofactor">
    <cofactor evidence="2">
        <name>Cu cation</name>
        <dbReference type="ChEBI" id="CHEBI:23378"/>
    </cofactor>
    <text evidence="2">Binds a copper B center.</text>
</comment>
<comment type="pathway">
    <text evidence="2">Energy metabolism; oxidative phosphorylation.</text>
</comment>
<comment type="subunit">
    <text evidence="3 4">Component of the cytochrome c oxidase (complex IV, CIV), a multisubunit enzyme composed of 11 subunits. The complex is composed of a catalytic core of 3 subunits Cox1, Cox2 and Cox3, encoded in the mitochondrial DNA, and 8 supernumerary subunits Cox4, Cox5a/Cox5, Cox6, Cox7, Cox8, Cox7a/Cox9, Cox6b/Cox12 and Cox6a/Cox13, which are encoded in the nuclear genome (PubMed:31316820). The complex exists as a monomer or a dimer and forms respiratory supercomplexes (SCs) in the inner mitochondrial membrane with NADH-ubiquinone oxidoreductase (complex I, CI) and ubiquinol-cytochrome c oxidoreductase (cytochrome b-c1 complex, complex III, CIII), resulting in various different assemblies (supercomplexes I(1)IV(1), I(1)III(3)IV(2), III(2)IV(1) and III(2)IV(2) as well as larger supercomplexes of compositions like I(1)III(2)IV(5-6)) (PubMed:17873079).</text>
</comment>
<comment type="subcellular location">
    <subcellularLocation>
        <location evidence="4">Mitochondrion inner membrane</location>
        <topology evidence="4">Multi-pass membrane protein</topology>
    </subcellularLocation>
</comment>
<comment type="PTM">
    <text evidence="8">The amino end of the mature protein may be Ser-3.</text>
</comment>
<comment type="similarity">
    <text evidence="7">Belongs to the heme-copper respiratory oxidase family.</text>
</comment>
<geneLocation type="mitochondrion"/>
<accession>P03945</accession>
<accession>M1RV30</accession>
<dbReference type="EC" id="7.1.1.9"/>
<dbReference type="EMBL" id="X01850">
    <property type="protein sequence ID" value="CAA25976.1"/>
    <property type="molecule type" value="Genomic_DNA"/>
</dbReference>
<dbReference type="EMBL" id="M36958">
    <property type="status" value="NOT_ANNOTATED_CDS"/>
    <property type="molecule type" value="Genomic_DNA"/>
</dbReference>
<dbReference type="EMBL" id="X14669">
    <property type="protein sequence ID" value="CAA32799.1"/>
    <property type="molecule type" value="Genomic_DNA"/>
</dbReference>
<dbReference type="EMBL" id="KC683708">
    <property type="protein sequence ID" value="AGG16005.1"/>
    <property type="molecule type" value="Genomic_DNA"/>
</dbReference>
<dbReference type="EMBL" id="X04512">
    <property type="protein sequence ID" value="CAA28195.1"/>
    <property type="molecule type" value="Genomic_DNA"/>
</dbReference>
<dbReference type="PIR" id="A00469">
    <property type="entry name" value="ODNC1"/>
</dbReference>
<dbReference type="RefSeq" id="YP_009126717.1">
    <property type="nucleotide sequence ID" value="NC_026614.1"/>
</dbReference>
<dbReference type="SMR" id="P03945"/>
<dbReference type="FunCoup" id="P03945">
    <property type="interactions" value="551"/>
</dbReference>
<dbReference type="STRING" id="367110.P03945"/>
<dbReference type="iPTMnet" id="P03945"/>
<dbReference type="EnsemblFungi" id="AGG16005">
    <property type="protein sequence ID" value="AGG16005"/>
    <property type="gene ID" value="NCU16016"/>
</dbReference>
<dbReference type="GeneID" id="23681570"/>
<dbReference type="KEGG" id="ncr:NCU16016"/>
<dbReference type="VEuPathDB" id="FungiDB:NCU16016"/>
<dbReference type="InParanoid" id="P03945"/>
<dbReference type="OrthoDB" id="4905839at2759"/>
<dbReference type="UniPathway" id="UPA00705"/>
<dbReference type="Proteomes" id="UP000001805">
    <property type="component" value="Mitochondrion"/>
</dbReference>
<dbReference type="GO" id="GO:0005743">
    <property type="term" value="C:mitochondrial inner membrane"/>
    <property type="evidence" value="ECO:0007669"/>
    <property type="project" value="UniProtKB-SubCell"/>
</dbReference>
<dbReference type="GO" id="GO:0045277">
    <property type="term" value="C:respiratory chain complex IV"/>
    <property type="evidence" value="ECO:0000318"/>
    <property type="project" value="GO_Central"/>
</dbReference>
<dbReference type="GO" id="GO:0004129">
    <property type="term" value="F:cytochrome-c oxidase activity"/>
    <property type="evidence" value="ECO:0007669"/>
    <property type="project" value="UniProtKB-EC"/>
</dbReference>
<dbReference type="GO" id="GO:0020037">
    <property type="term" value="F:heme binding"/>
    <property type="evidence" value="ECO:0007669"/>
    <property type="project" value="InterPro"/>
</dbReference>
<dbReference type="GO" id="GO:0046872">
    <property type="term" value="F:metal ion binding"/>
    <property type="evidence" value="ECO:0007669"/>
    <property type="project" value="UniProtKB-KW"/>
</dbReference>
<dbReference type="GO" id="GO:0009060">
    <property type="term" value="P:aerobic respiration"/>
    <property type="evidence" value="ECO:0000318"/>
    <property type="project" value="GO_Central"/>
</dbReference>
<dbReference type="GO" id="GO:0006119">
    <property type="term" value="P:oxidative phosphorylation"/>
    <property type="evidence" value="ECO:0007669"/>
    <property type="project" value="UniProtKB-UniPathway"/>
</dbReference>
<dbReference type="GO" id="GO:0022904">
    <property type="term" value="P:respiratory electron transport chain"/>
    <property type="evidence" value="ECO:0000318"/>
    <property type="project" value="GO_Central"/>
</dbReference>
<dbReference type="CDD" id="cd01663">
    <property type="entry name" value="Cyt_c_Oxidase_I"/>
    <property type="match status" value="1"/>
</dbReference>
<dbReference type="FunFam" id="1.20.210.10:FF:000001">
    <property type="entry name" value="Cytochrome c oxidase subunit 1"/>
    <property type="match status" value="1"/>
</dbReference>
<dbReference type="Gene3D" id="1.20.210.10">
    <property type="entry name" value="Cytochrome c oxidase-like, subunit I domain"/>
    <property type="match status" value="1"/>
</dbReference>
<dbReference type="InterPro" id="IPR023616">
    <property type="entry name" value="Cyt_c_oxase-like_su1_dom"/>
</dbReference>
<dbReference type="InterPro" id="IPR036927">
    <property type="entry name" value="Cyt_c_oxase-like_su1_sf"/>
</dbReference>
<dbReference type="InterPro" id="IPR000883">
    <property type="entry name" value="Cyt_C_Oxase_1"/>
</dbReference>
<dbReference type="InterPro" id="IPR023615">
    <property type="entry name" value="Cyt_c_Oxase_su1_BS"/>
</dbReference>
<dbReference type="InterPro" id="IPR033944">
    <property type="entry name" value="Cyt_c_oxase_su1_dom"/>
</dbReference>
<dbReference type="PANTHER" id="PTHR10422">
    <property type="entry name" value="CYTOCHROME C OXIDASE SUBUNIT 1"/>
    <property type="match status" value="1"/>
</dbReference>
<dbReference type="PANTHER" id="PTHR10422:SF18">
    <property type="entry name" value="CYTOCHROME C OXIDASE SUBUNIT 1"/>
    <property type="match status" value="1"/>
</dbReference>
<dbReference type="Pfam" id="PF00115">
    <property type="entry name" value="COX1"/>
    <property type="match status" value="1"/>
</dbReference>
<dbReference type="PRINTS" id="PR01165">
    <property type="entry name" value="CYCOXIDASEI"/>
</dbReference>
<dbReference type="SUPFAM" id="SSF81442">
    <property type="entry name" value="Cytochrome c oxidase subunit I-like"/>
    <property type="match status" value="1"/>
</dbReference>
<dbReference type="PROSITE" id="PS50855">
    <property type="entry name" value="COX1"/>
    <property type="match status" value="1"/>
</dbReference>
<dbReference type="PROSITE" id="PS00077">
    <property type="entry name" value="COX1_CUB"/>
    <property type="match status" value="1"/>
</dbReference>
<gene>
    <name type="primary">cox-1</name>
    <name type="synonym">coi</name>
    <name type="synonym">cox1</name>
    <name type="ORF">NCM025</name>
    <name type="ORF">NCU16016</name>
</gene>
<name>COX1_NEUCR</name>
<feature type="chain" id="PRO_0000183366" description="Cytochrome c oxidase subunit 1">
    <location>
        <begin position="1"/>
        <end position="557"/>
    </location>
</feature>
<feature type="topological domain" description="Mitochondrial matrix" evidence="4">
    <location>
        <begin position="1"/>
        <end position="20"/>
    </location>
</feature>
<feature type="transmembrane region" description="Helical; Name=1" evidence="4">
    <location>
        <begin position="21"/>
        <end position="45"/>
    </location>
</feature>
<feature type="topological domain" description="Mitochondrial intermembrane" evidence="4">
    <location>
        <begin position="46"/>
        <end position="59"/>
    </location>
</feature>
<feature type="transmembrane region" description="Helical; Name=2" evidence="4">
    <location>
        <begin position="60"/>
        <end position="93"/>
    </location>
</feature>
<feature type="topological domain" description="Mitochondrial matrix" evidence="4">
    <location>
        <begin position="94"/>
        <end position="102"/>
    </location>
</feature>
<feature type="transmembrane region" description="Helical; Name=3" evidence="4">
    <location>
        <begin position="103"/>
        <end position="123"/>
    </location>
</feature>
<feature type="topological domain" description="Mitochondrial intermembrane" evidence="4">
    <location>
        <begin position="124"/>
        <end position="147"/>
    </location>
</feature>
<feature type="transmembrane region" description="Helical; Name=4" evidence="4">
    <location>
        <begin position="148"/>
        <end position="176"/>
    </location>
</feature>
<feature type="topological domain" description="Mitochondrial matrix" evidence="4">
    <location>
        <begin position="177"/>
        <end position="188"/>
    </location>
</feature>
<feature type="transmembrane region" description="Helical; Name=5" evidence="4">
    <location>
        <begin position="189"/>
        <end position="220"/>
    </location>
</feature>
<feature type="topological domain" description="Mitochondrial intermembrane" evidence="4">
    <location>
        <begin position="221"/>
        <end position="233"/>
    </location>
</feature>
<feature type="transmembrane region" description="Helical; Name=6" evidence="4">
    <location>
        <begin position="234"/>
        <end position="268"/>
    </location>
</feature>
<feature type="topological domain" description="Mitochondrial matrix" evidence="4">
    <location>
        <begin position="269"/>
        <end position="274"/>
    </location>
</feature>
<feature type="transmembrane region" description="Helical; Name=7" evidence="4">
    <location>
        <begin position="275"/>
        <end position="300"/>
    </location>
</feature>
<feature type="topological domain" description="Mitochondrial intermembrane" evidence="4">
    <location>
        <begin position="301"/>
        <end position="303"/>
    </location>
</feature>
<feature type="transmembrane region" description="Helical; Name=8" evidence="4">
    <location>
        <begin position="304"/>
        <end position="332"/>
    </location>
</feature>
<feature type="topological domain" description="Mitochondrial matrix" evidence="4">
    <location>
        <begin position="333"/>
        <end position="340"/>
    </location>
</feature>
<feature type="transmembrane region" description="Helical; Name=9" evidence="4">
    <location>
        <begin position="341"/>
        <end position="363"/>
    </location>
</feature>
<feature type="topological domain" description="Mitochondrial intermembrane" evidence="4">
    <location>
        <begin position="364"/>
        <end position="375"/>
    </location>
</feature>
<feature type="transmembrane region" description="Helical; Name=10" evidence="4">
    <location>
        <begin position="376"/>
        <end position="405"/>
    </location>
</feature>
<feature type="topological domain" description="Mitochondrial matrix" evidence="4">
    <location>
        <begin position="406"/>
        <end position="411"/>
    </location>
</feature>
<feature type="transmembrane region" description="Helical; Name=11" evidence="4">
    <location>
        <begin position="412"/>
        <end position="436"/>
    </location>
</feature>
<feature type="topological domain" description="Mitochondrial intermembrane" evidence="4">
    <location>
        <begin position="437"/>
        <end position="454"/>
    </location>
</feature>
<feature type="transmembrane region" description="Helical; Name=12" evidence="4">
    <location>
        <begin position="455"/>
        <end position="479"/>
    </location>
</feature>
<feature type="topological domain" description="Mitochondrial matrix" evidence="4">
    <location>
        <begin position="480"/>
        <end position="557"/>
    </location>
</feature>
<feature type="binding site" evidence="2">
    <location>
        <position position="45"/>
    </location>
    <ligand>
        <name>Ca(2+)</name>
        <dbReference type="ChEBI" id="CHEBI:29108"/>
    </ligand>
</feature>
<feature type="binding site" evidence="2">
    <location>
        <position position="50"/>
    </location>
    <ligand>
        <name>Ca(2+)</name>
        <dbReference type="ChEBI" id="CHEBI:29108"/>
    </ligand>
</feature>
<feature type="binding site" description="axial binding residue" evidence="2">
    <location>
        <position position="67"/>
    </location>
    <ligand>
        <name>Fe(II)-heme a</name>
        <dbReference type="ChEBI" id="CHEBI:61715"/>
        <note>low-spin</note>
    </ligand>
    <ligandPart>
        <name>Fe</name>
        <dbReference type="ChEBI" id="CHEBI:18248"/>
    </ligandPart>
</feature>
<feature type="binding site" evidence="2">
    <location>
        <position position="246"/>
    </location>
    <ligand>
        <name>Cu cation</name>
        <dbReference type="ChEBI" id="CHEBI:23378"/>
        <label>B</label>
    </ligand>
</feature>
<feature type="binding site" evidence="1">
    <location>
        <position position="250"/>
    </location>
    <ligand>
        <name>O2</name>
        <dbReference type="ChEBI" id="CHEBI:15379"/>
    </ligand>
</feature>
<feature type="binding site" evidence="2">
    <location>
        <position position="295"/>
    </location>
    <ligand>
        <name>Cu cation</name>
        <dbReference type="ChEBI" id="CHEBI:23378"/>
        <label>B</label>
    </ligand>
</feature>
<feature type="binding site" evidence="2">
    <location>
        <position position="296"/>
    </location>
    <ligand>
        <name>Cu cation</name>
        <dbReference type="ChEBI" id="CHEBI:23378"/>
        <label>B</label>
    </ligand>
</feature>
<feature type="binding site" evidence="2">
    <location>
        <position position="373"/>
    </location>
    <ligand>
        <name>Mg(2+)</name>
        <dbReference type="ChEBI" id="CHEBI:18420"/>
        <note>ligand shared with COX2</note>
    </ligand>
</feature>
<feature type="binding site" evidence="2">
    <location>
        <position position="374"/>
    </location>
    <ligand>
        <name>Mg(2+)</name>
        <dbReference type="ChEBI" id="CHEBI:18420"/>
        <note>ligand shared with COX2</note>
    </ligand>
</feature>
<feature type="binding site" description="axial binding residue" evidence="2">
    <location>
        <position position="381"/>
    </location>
    <ligand>
        <name>heme a3</name>
        <dbReference type="ChEBI" id="CHEBI:83282"/>
        <note>high-spin</note>
    </ligand>
    <ligandPart>
        <name>Fe</name>
        <dbReference type="ChEBI" id="CHEBI:18248"/>
    </ligandPart>
</feature>
<feature type="binding site" description="axial binding residue" evidence="2">
    <location>
        <position position="383"/>
    </location>
    <ligand>
        <name>Fe(II)-heme a</name>
        <dbReference type="ChEBI" id="CHEBI:61715"/>
        <note>low-spin</note>
    </ligand>
    <ligandPart>
        <name>Fe</name>
        <dbReference type="ChEBI" id="CHEBI:18248"/>
    </ligandPart>
</feature>
<feature type="lipid moiety-binding region" description="N6-myristoyl lysine" evidence="5">
    <location>
        <position position="324"/>
    </location>
</feature>
<feature type="cross-link" description="1'-histidyl-3'-tyrosine (His-Tyr)" evidence="2">
    <location>
        <begin position="246"/>
        <end position="250"/>
    </location>
</feature>
<feature type="sequence conflict" description="In Ref. 1; CAA25976 and 3; CAA28195." evidence="7" ref="1 3">
    <original>V</original>
    <variation>A</variation>
    <location>
        <position position="527"/>
    </location>
</feature>
<sequence length="557" mass="61522">MSSISIWTERWFLSTNAKDIGVLYLIFALFSGLLGTAFSVLIRMELSGPGVQYIADNQLYNAIITAHAILMIFFMVMPALIGGFGNFLLPLLVGGPDMAFPRLNNISFWLLPPSLLLLVFSACIEGGAGTGWTIYPPLSGVQSHSGPSVDLAIFALHLSGVSSLLGSINFITTIVNMRTPGIRLHKLALFGWAVVITAVLLLLSLPVLAGAITMLLTDRNFNTSFFETAGGGDPILFQHLFWFFGHPEVYILIIPGFGIISTTISAYSNKSVFGYIGMVYAMMSIGILGFIVWSHHMYTVGLDVDTRAYFTAATLIIAVPTGIKIFSWLATCYGGSIRLTPSMLFALGFVFMFTIGGLSGVVLANASLDIAFHDTYYVVAHFHYVLSMGAVFAMFSGWYHWVPKILGLNYNMVLSKAQFWLLFIGVNLTFFPQHFLGLQGMPRRISDYPDAFSGWNLISSFGSIVSVVASWLFLYIVYIQLVQGEYAGRYPWSIPQFYTDSLRALLNRSYPSLEWSISSPPKPHSFVSLPLQSSSFFLSFFRLSSYGEQKEISGRQN</sequence>
<proteinExistence type="evidence at protein level"/>
<protein>
    <recommendedName>
        <fullName>Cytochrome c oxidase subunit 1</fullName>
        <ecNumber>7.1.1.9</ecNumber>
    </recommendedName>
    <alternativeName>
        <fullName>Cytochrome c oxidase polypeptide I</fullName>
    </alternativeName>
    <alternativeName>
        <fullName evidence="6">Cytochrome c oxidase subunit Cox1</fullName>
    </alternativeName>
</protein>
<keyword id="KW-0106">Calcium</keyword>
<keyword id="KW-0186">Copper</keyword>
<keyword id="KW-0903">Direct protein sequencing</keyword>
<keyword id="KW-0249">Electron transport</keyword>
<keyword id="KW-0349">Heme</keyword>
<keyword id="KW-0408">Iron</keyword>
<keyword id="KW-0449">Lipoprotein</keyword>
<keyword id="KW-0460">Magnesium</keyword>
<keyword id="KW-0472">Membrane</keyword>
<keyword id="KW-0479">Metal-binding</keyword>
<keyword id="KW-0496">Mitochondrion</keyword>
<keyword id="KW-0999">Mitochondrion inner membrane</keyword>
<keyword id="KW-0519">Myristate</keyword>
<keyword id="KW-1185">Reference proteome</keyword>
<keyword id="KW-0679">Respiratory chain</keyword>
<keyword id="KW-1278">Translocase</keyword>
<keyword id="KW-0812">Transmembrane</keyword>
<keyword id="KW-1133">Transmembrane helix</keyword>
<keyword id="KW-0813">Transport</keyword>
<evidence type="ECO:0000250" key="1">
    <source>
        <dbReference type="UniProtKB" id="P00396"/>
    </source>
</evidence>
<evidence type="ECO:0000250" key="2">
    <source>
        <dbReference type="UniProtKB" id="P00401"/>
    </source>
</evidence>
<evidence type="ECO:0000269" key="3">
    <source>
    </source>
</evidence>
<evidence type="ECO:0000269" key="4">
    <source>
    </source>
</evidence>
<evidence type="ECO:0000269" key="5">
    <source>
    </source>
</evidence>
<evidence type="ECO:0000303" key="6">
    <source>
    </source>
</evidence>
<evidence type="ECO:0000305" key="7"/>
<evidence type="ECO:0000305" key="8">
    <source>
    </source>
</evidence>
<reference key="1">
    <citation type="journal article" date="1982" name="EMBO J.">
        <title>Subunit 1 of cytochrome oxidase from Neurospora crassa: nucleotide sequence of the coding gene and partial amino acid sequence of the protein.</title>
        <authorList>
            <person name="Burger G."/>
            <person name="Scriven C."/>
            <person name="Machleidt W."/>
            <person name="Werner S."/>
        </authorList>
    </citation>
    <scope>NUCLEOTIDE SEQUENCE [GENOMIC DNA]</scope>
    <scope>PROTEIN SEQUENCE OF 3-99; 234-285; 346-354; 443-489 AND 494-521</scope>
</reference>
<reference key="2">
    <citation type="journal article" date="1983" name="Curr. Genet.">
        <title>The structure of the gene for subunit I of cytochrome c oxidase in Neurospora crassa mitochondria.</title>
        <authorList>
            <person name="de Jonge J.C."/>
            <person name="de Vries H."/>
        </authorList>
    </citation>
    <scope>NUCLEOTIDE SEQUENCE [GENOMIC DNA]</scope>
</reference>
<reference key="3">
    <citation type="journal article" date="1989" name="Nucleic Acids Res.">
        <title>A group II intron in the Neurospora mitochondrial coI gene: nucleotide sequence and implications for splicing and molecular evolution.</title>
        <authorList>
            <person name="Field D.J."/>
            <person name="Sommerfield A."/>
            <person name="Saville B.J."/>
            <person name="Collins R.A."/>
        </authorList>
    </citation>
    <scope>NUCLEOTIDE SEQUENCE [GENOMIC DNA]</scope>
    <source>
        <strain>Adiopodoume / FGSC 430</strain>
    </source>
</reference>
<reference key="4">
    <citation type="journal article" date="2003" name="Nature">
        <title>The genome sequence of the filamentous fungus Neurospora crassa.</title>
        <authorList>
            <person name="Galagan J.E."/>
            <person name="Calvo S.E."/>
            <person name="Borkovich K.A."/>
            <person name="Selker E.U."/>
            <person name="Read N.D."/>
            <person name="Jaffe D.B."/>
            <person name="FitzHugh W."/>
            <person name="Ma L.-J."/>
            <person name="Smirnov S."/>
            <person name="Purcell S."/>
            <person name="Rehman B."/>
            <person name="Elkins T."/>
            <person name="Engels R."/>
            <person name="Wang S."/>
            <person name="Nielsen C.B."/>
            <person name="Butler J."/>
            <person name="Endrizzi M."/>
            <person name="Qui D."/>
            <person name="Ianakiev P."/>
            <person name="Bell-Pedersen D."/>
            <person name="Nelson M.A."/>
            <person name="Werner-Washburne M."/>
            <person name="Selitrennikoff C.P."/>
            <person name="Kinsey J.A."/>
            <person name="Braun E.L."/>
            <person name="Zelter A."/>
            <person name="Schulte U."/>
            <person name="Kothe G.O."/>
            <person name="Jedd G."/>
            <person name="Mewes H.-W."/>
            <person name="Staben C."/>
            <person name="Marcotte E."/>
            <person name="Greenberg D."/>
            <person name="Roy A."/>
            <person name="Foley K."/>
            <person name="Naylor J."/>
            <person name="Stange-Thomann N."/>
            <person name="Barrett R."/>
            <person name="Gnerre S."/>
            <person name="Kamal M."/>
            <person name="Kamvysselis M."/>
            <person name="Mauceli E.W."/>
            <person name="Bielke C."/>
            <person name="Rudd S."/>
            <person name="Frishman D."/>
            <person name="Krystofova S."/>
            <person name="Rasmussen C."/>
            <person name="Metzenberg R.L."/>
            <person name="Perkins D.D."/>
            <person name="Kroken S."/>
            <person name="Cogoni C."/>
            <person name="Macino G."/>
            <person name="Catcheside D.E.A."/>
            <person name="Li W."/>
            <person name="Pratt R.J."/>
            <person name="Osmani S.A."/>
            <person name="DeSouza C.P.C."/>
            <person name="Glass N.L."/>
            <person name="Orbach M.J."/>
            <person name="Berglund J.A."/>
            <person name="Voelker R."/>
            <person name="Yarden O."/>
            <person name="Plamann M."/>
            <person name="Seiler S."/>
            <person name="Dunlap J.C."/>
            <person name="Radford A."/>
            <person name="Aramayo R."/>
            <person name="Natvig D.O."/>
            <person name="Alex L.A."/>
            <person name="Mannhaupt G."/>
            <person name="Ebbole D.J."/>
            <person name="Freitag M."/>
            <person name="Paulsen I."/>
            <person name="Sachs M.S."/>
            <person name="Lander E.S."/>
            <person name="Nusbaum C."/>
            <person name="Birren B.W."/>
        </authorList>
    </citation>
    <scope>NUCLEOTIDE SEQUENCE [LARGE SCALE GENOMIC DNA]</scope>
    <source>
        <strain>ATCC 24698 / 74-OR23-1A / CBS 708.71 / DSM 1257 / FGSC 987</strain>
    </source>
</reference>
<reference key="5">
    <citation type="book" date="2004" name="The Mycota II, Genetics and Biotechnology (2nd edition)">
        <title>Mitochondrial genetics of Neurospora.</title>
        <editorList>
            <person name="Kueck U."/>
        </editorList>
        <authorList>
            <person name="Kennell J.C."/>
            <person name="Collins R.A."/>
            <person name="Griffiths A.J.F."/>
            <person name="Nargang F.E."/>
        </authorList>
    </citation>
    <scope>GENOME REANNOTATION</scope>
    <source>
        <strain>ATCC 24698 / 74-OR23-1A / CBS 708.71 / DSM 1257 / FGSC 987</strain>
    </source>
</reference>
<reference key="6">
    <citation type="journal article" date="1986" name="J. Mol. Biol.">
        <title>Mitochondrial gene URFN of Neurospora crassa codes for a long polypeptide with highly repetitive structure.</title>
        <authorList>
            <person name="Burger G."/>
            <person name="Werner S."/>
        </authorList>
    </citation>
    <scope>NUCLEOTIDE SEQUENCE [GENOMIC DNA] OF 519-557</scope>
</reference>
<reference key="7">
    <citation type="journal article" date="1995" name="Proc. Natl. Acad. Sci. U.S.A.">
        <title>Cytochrome c oxidase in Neurospora crassa contains myristic acid covalently linked to subunit 1.</title>
        <authorList>
            <person name="Vassilev A.O."/>
            <person name="Plesofsky-Vig N."/>
            <person name="Brambl R."/>
        </authorList>
    </citation>
    <scope>MYRISTOYLATION AT LYS-324</scope>
</reference>
<reference key="8">
    <citation type="journal article" date="2007" name="Eukaryot. Cell">
        <title>Supramolecular organization of the respiratory chain in Neurospora crassa mitochondria.</title>
        <authorList>
            <person name="Marques I."/>
            <person name="Dencher N.A."/>
            <person name="Videira A."/>
            <person name="Krause F."/>
        </authorList>
    </citation>
    <scope>COMPOSITION OF THE CYTOCHROME C OXIDASE COMPLEX</scope>
</reference>
<reference key="9">
    <citation type="journal article" date="2019" name="IUCrJ">
        <title>Cryo-EM structure of Neurospora crassa respiratory complex IV.</title>
        <authorList>
            <person name="Bausewein T."/>
            <person name="Nussberger S."/>
            <person name="Kuehlbrandt W."/>
        </authorList>
    </citation>
    <scope>STRUCTURE BY ELECTRON MICROSCOPY (5.5 ANGSTROMS)</scope>
    <scope>SUBUNIT</scope>
</reference>
<organism>
    <name type="scientific">Neurospora crassa (strain ATCC 24698 / 74-OR23-1A / CBS 708.71 / DSM 1257 / FGSC 987)</name>
    <dbReference type="NCBI Taxonomy" id="367110"/>
    <lineage>
        <taxon>Eukaryota</taxon>
        <taxon>Fungi</taxon>
        <taxon>Dikarya</taxon>
        <taxon>Ascomycota</taxon>
        <taxon>Pezizomycotina</taxon>
        <taxon>Sordariomycetes</taxon>
        <taxon>Sordariomycetidae</taxon>
        <taxon>Sordariales</taxon>
        <taxon>Sordariaceae</taxon>
        <taxon>Neurospora</taxon>
    </lineage>
</organism>